<proteinExistence type="evidence at protein level"/>
<keyword id="KW-0002">3D-structure</keyword>
<keyword id="KW-0012">Acyltransferase</keyword>
<keyword id="KW-0903">Direct protein sequencing</keyword>
<keyword id="KW-1185">Reference proteome</keyword>
<keyword id="KW-0808">Transferase</keyword>
<feature type="chain" id="PRO_0000413033" description="Beta-ketothiolase BktB">
    <location>
        <begin position="1"/>
        <end position="394"/>
    </location>
</feature>
<feature type="active site" description="Acyl-thioester intermediate" evidence="1">
    <location>
        <position position="90"/>
    </location>
</feature>
<feature type="active site" description="Proton acceptor" evidence="2">
    <location>
        <position position="350"/>
    </location>
</feature>
<feature type="active site" description="Proton acceptor" evidence="2">
    <location>
        <position position="380"/>
    </location>
</feature>
<feature type="strand" evidence="6">
    <location>
        <begin position="5"/>
        <end position="13"/>
    </location>
</feature>
<feature type="turn" evidence="6">
    <location>
        <begin position="21"/>
        <end position="24"/>
    </location>
</feature>
<feature type="helix" evidence="6">
    <location>
        <begin position="27"/>
        <end position="42"/>
    </location>
</feature>
<feature type="helix" evidence="6">
    <location>
        <begin position="46"/>
        <end position="48"/>
    </location>
</feature>
<feature type="strand" evidence="6">
    <location>
        <begin position="51"/>
        <end position="55"/>
    </location>
</feature>
<feature type="helix" evidence="6">
    <location>
        <begin position="62"/>
        <end position="66"/>
    </location>
</feature>
<feature type="helix" evidence="6">
    <location>
        <begin position="67"/>
        <end position="74"/>
    </location>
</feature>
<feature type="strand" evidence="6">
    <location>
        <begin position="83"/>
        <end position="87"/>
    </location>
</feature>
<feature type="helix" evidence="6">
    <location>
        <begin position="89"/>
        <end position="91"/>
    </location>
</feature>
<feature type="helix" evidence="6">
    <location>
        <begin position="92"/>
        <end position="105"/>
    </location>
</feature>
<feature type="strand" evidence="6">
    <location>
        <begin position="110"/>
        <end position="120"/>
    </location>
</feature>
<feature type="strand" evidence="6">
    <location>
        <begin position="125"/>
        <end position="127"/>
    </location>
</feature>
<feature type="turn" evidence="6">
    <location>
        <begin position="128"/>
        <end position="132"/>
    </location>
</feature>
<feature type="strand" evidence="5">
    <location>
        <begin position="135"/>
        <end position="137"/>
    </location>
</feature>
<feature type="strand" evidence="6">
    <location>
        <begin position="139"/>
        <end position="143"/>
    </location>
</feature>
<feature type="helix" evidence="6">
    <location>
        <begin position="144"/>
        <end position="148"/>
    </location>
</feature>
<feature type="turn" evidence="6">
    <location>
        <begin position="152"/>
        <end position="154"/>
    </location>
</feature>
<feature type="helix" evidence="6">
    <location>
        <begin position="158"/>
        <end position="169"/>
    </location>
</feature>
<feature type="helix" evidence="6">
    <location>
        <begin position="173"/>
        <end position="193"/>
    </location>
</feature>
<feature type="turn" evidence="6">
    <location>
        <begin position="194"/>
        <end position="199"/>
    </location>
</feature>
<feature type="strand" evidence="6">
    <location>
        <begin position="203"/>
        <end position="207"/>
    </location>
</feature>
<feature type="strand" evidence="6">
    <location>
        <begin position="210"/>
        <end position="214"/>
    </location>
</feature>
<feature type="helix" evidence="6">
    <location>
        <begin position="226"/>
        <end position="230"/>
    </location>
</feature>
<feature type="strand" evidence="6">
    <location>
        <begin position="238"/>
        <end position="240"/>
    </location>
</feature>
<feature type="strand" evidence="6">
    <location>
        <begin position="245"/>
        <end position="248"/>
    </location>
</feature>
<feature type="strand" evidence="6">
    <location>
        <begin position="252"/>
        <end position="262"/>
    </location>
</feature>
<feature type="helix" evidence="6">
    <location>
        <begin position="263"/>
        <end position="268"/>
    </location>
</feature>
<feature type="strand" evidence="6">
    <location>
        <begin position="274"/>
        <end position="284"/>
    </location>
</feature>
<feature type="helix" evidence="6">
    <location>
        <begin position="287"/>
        <end position="292"/>
    </location>
</feature>
<feature type="helix" evidence="6">
    <location>
        <begin position="294"/>
        <end position="305"/>
    </location>
</feature>
<feature type="helix" evidence="6">
    <location>
        <begin position="309"/>
        <end position="311"/>
    </location>
</feature>
<feature type="strand" evidence="6">
    <location>
        <begin position="313"/>
        <end position="317"/>
    </location>
</feature>
<feature type="helix" evidence="6">
    <location>
        <begin position="322"/>
        <end position="332"/>
    </location>
</feature>
<feature type="turn" evidence="6">
    <location>
        <begin position="336"/>
        <end position="338"/>
    </location>
</feature>
<feature type="turn" evidence="6">
    <location>
        <begin position="345"/>
        <end position="347"/>
    </location>
</feature>
<feature type="helix" evidence="6">
    <location>
        <begin position="352"/>
        <end position="369"/>
    </location>
</feature>
<feature type="strand" evidence="6">
    <location>
        <begin position="373"/>
        <end position="381"/>
    </location>
</feature>
<feature type="turn" evidence="6">
    <location>
        <begin position="382"/>
        <end position="384"/>
    </location>
</feature>
<feature type="strand" evidence="6">
    <location>
        <begin position="385"/>
        <end position="392"/>
    </location>
</feature>
<comment type="function">
    <text evidence="3">Required for efficient production of poly(beta-hydroxybutyrate-co-beta-hydroxyvalerate) (PHBV). Catalyzes the condensation of acetyl-CoA and propionyl-CoA to form beta-ketovaleryl-CoA, and the condensation of two acetyl-CoA molecules to form acetoacetyl-CoA.</text>
</comment>
<comment type="catalytic activity">
    <reaction evidence="3">
        <text>an acyl-CoA + acetyl-CoA = a 3-oxoacyl-CoA + CoA</text>
        <dbReference type="Rhea" id="RHEA:21564"/>
        <dbReference type="ChEBI" id="CHEBI:57287"/>
        <dbReference type="ChEBI" id="CHEBI:57288"/>
        <dbReference type="ChEBI" id="CHEBI:58342"/>
        <dbReference type="ChEBI" id="CHEBI:90726"/>
        <dbReference type="EC" id="2.3.1.16"/>
    </reaction>
</comment>
<comment type="catalytic activity">
    <reaction evidence="2 3">
        <text>2 acetyl-CoA = acetoacetyl-CoA + CoA</text>
        <dbReference type="Rhea" id="RHEA:21036"/>
        <dbReference type="ChEBI" id="CHEBI:57286"/>
        <dbReference type="ChEBI" id="CHEBI:57287"/>
        <dbReference type="ChEBI" id="CHEBI:57288"/>
        <dbReference type="EC" id="2.3.1.9"/>
    </reaction>
</comment>
<comment type="disruption phenotype">
    <text evidence="3">Mutants are impaired in their ability to produce PHBV when grown on propionate.</text>
</comment>
<comment type="similarity">
    <text evidence="4">Belongs to the thiolase-like superfamily. Thiolase family.</text>
</comment>
<gene>
    <name type="primary">bktB</name>
    <name type="ordered locus">H16_A1445</name>
</gene>
<organism>
    <name type="scientific">Cupriavidus necator (strain ATCC 17699 / DSM 428 / KCTC 22496 / NCIMB 10442 / H16 / Stanier 337)</name>
    <name type="common">Ralstonia eutropha</name>
    <dbReference type="NCBI Taxonomy" id="381666"/>
    <lineage>
        <taxon>Bacteria</taxon>
        <taxon>Pseudomonadati</taxon>
        <taxon>Pseudomonadota</taxon>
        <taxon>Betaproteobacteria</taxon>
        <taxon>Burkholderiales</taxon>
        <taxon>Burkholderiaceae</taxon>
        <taxon>Cupriavidus</taxon>
    </lineage>
</organism>
<sequence length="394" mass="40904">MTREVVVVSGVRTAIGTFGGSLKDVAPAELGALVVREALARAQVSGDDVGHVVFGNVIQTEPRDMYLGRVAAVNGGVTINAPALTVNRLCGSGLQAIVSAAQTILLGDTDVAIGGGAESMSRAPYLAPAARWGARMGDAGLVDMMLGALHDPFHRIHMGVTAENVAKEYDISRAQQDEAALESHRRASAAIKAGYFKDQIVPVVSKGRKGDVTFDTDEHVRHDATIDDMTKLRPVFVKENGTVTAGNASGLNDAAAAVVMMERAEAERRGLKPLARLVSYGHAGVDPKAMGIGPVPATKIALERAGLQVSDLDVIEANEAFAAQACAVTKALGLDPAKVNPNGSGISLGHPIGATGALITVKALHELNRVQGRYALVTMCIGGGQGIAAIFERI</sequence>
<dbReference type="EC" id="2.3.1.16"/>
<dbReference type="EC" id="2.3.1.9"/>
<dbReference type="EMBL" id="AF026544">
    <property type="protein sequence ID" value="AAC38322.1"/>
    <property type="molecule type" value="Genomic_DNA"/>
</dbReference>
<dbReference type="EMBL" id="AM260479">
    <property type="protein sequence ID" value="CAJ92580.1"/>
    <property type="molecule type" value="Genomic_DNA"/>
</dbReference>
<dbReference type="RefSeq" id="WP_011615089.1">
    <property type="nucleotide sequence ID" value="NC_008313.1"/>
</dbReference>
<dbReference type="PDB" id="4NZS">
    <property type="method" value="X-ray"/>
    <property type="resolution" value="2.29 A"/>
    <property type="chains" value="A/B=2-394"/>
</dbReference>
<dbReference type="PDB" id="4W61">
    <property type="method" value="X-ray"/>
    <property type="resolution" value="2.01 A"/>
    <property type="chains" value="A/B/C/D/E/F/G/H/I/J/K/L/M/N/O/P=1-394"/>
</dbReference>
<dbReference type="PDBsum" id="4NZS"/>
<dbReference type="PDBsum" id="4W61"/>
<dbReference type="SMR" id="Q0KBP1"/>
<dbReference type="STRING" id="381666.H16_A1445"/>
<dbReference type="KEGG" id="reh:H16_A1445"/>
<dbReference type="PATRIC" id="fig|381666.6.peg.1834"/>
<dbReference type="eggNOG" id="COG0183">
    <property type="taxonomic scope" value="Bacteria"/>
</dbReference>
<dbReference type="HOGENOM" id="CLU_031026_0_0_4"/>
<dbReference type="OrthoDB" id="6139495at2"/>
<dbReference type="BioCyc" id="MetaCyc:MONOMER-16779"/>
<dbReference type="BRENDA" id="2.3.1.16">
    <property type="organism ID" value="231"/>
</dbReference>
<dbReference type="EvolutionaryTrace" id="Q0KBP1"/>
<dbReference type="Proteomes" id="UP000008210">
    <property type="component" value="Chromosome 1"/>
</dbReference>
<dbReference type="GO" id="GO:0003985">
    <property type="term" value="F:acetyl-CoA C-acetyltransferase activity"/>
    <property type="evidence" value="ECO:0007669"/>
    <property type="project" value="UniProtKB-EC"/>
</dbReference>
<dbReference type="CDD" id="cd00751">
    <property type="entry name" value="thiolase"/>
    <property type="match status" value="1"/>
</dbReference>
<dbReference type="FunFam" id="3.40.47.10:FF:000010">
    <property type="entry name" value="Acetyl-CoA acetyltransferase (Thiolase)"/>
    <property type="match status" value="1"/>
</dbReference>
<dbReference type="Gene3D" id="3.40.47.10">
    <property type="match status" value="2"/>
</dbReference>
<dbReference type="InterPro" id="IPR002155">
    <property type="entry name" value="Thiolase"/>
</dbReference>
<dbReference type="InterPro" id="IPR016039">
    <property type="entry name" value="Thiolase-like"/>
</dbReference>
<dbReference type="InterPro" id="IPR053528">
    <property type="entry name" value="Thiolase-like_BktB"/>
</dbReference>
<dbReference type="InterPro" id="IPR020615">
    <property type="entry name" value="Thiolase_acyl_enz_int_AS"/>
</dbReference>
<dbReference type="InterPro" id="IPR020610">
    <property type="entry name" value="Thiolase_AS"/>
</dbReference>
<dbReference type="InterPro" id="IPR020617">
    <property type="entry name" value="Thiolase_C"/>
</dbReference>
<dbReference type="InterPro" id="IPR020616">
    <property type="entry name" value="Thiolase_N"/>
</dbReference>
<dbReference type="NCBIfam" id="TIGR01930">
    <property type="entry name" value="AcCoA-C-Actrans"/>
    <property type="match status" value="1"/>
</dbReference>
<dbReference type="NCBIfam" id="NF042999">
    <property type="entry name" value="bketothiol_BktB"/>
    <property type="match status" value="1"/>
</dbReference>
<dbReference type="NCBIfam" id="NF006552">
    <property type="entry name" value="PRK09051.1"/>
    <property type="match status" value="1"/>
</dbReference>
<dbReference type="PANTHER" id="PTHR18919:SF107">
    <property type="entry name" value="ACETYL-COA ACETYLTRANSFERASE, CYTOSOLIC"/>
    <property type="match status" value="1"/>
</dbReference>
<dbReference type="PANTHER" id="PTHR18919">
    <property type="entry name" value="ACETYL-COA C-ACYLTRANSFERASE"/>
    <property type="match status" value="1"/>
</dbReference>
<dbReference type="Pfam" id="PF02803">
    <property type="entry name" value="Thiolase_C"/>
    <property type="match status" value="1"/>
</dbReference>
<dbReference type="Pfam" id="PF00108">
    <property type="entry name" value="Thiolase_N"/>
    <property type="match status" value="1"/>
</dbReference>
<dbReference type="PIRSF" id="PIRSF000429">
    <property type="entry name" value="Ac-CoA_Ac_transf"/>
    <property type="match status" value="1"/>
</dbReference>
<dbReference type="SUPFAM" id="SSF53901">
    <property type="entry name" value="Thiolase-like"/>
    <property type="match status" value="2"/>
</dbReference>
<dbReference type="PROSITE" id="PS00098">
    <property type="entry name" value="THIOLASE_1"/>
    <property type="match status" value="1"/>
</dbReference>
<dbReference type="PROSITE" id="PS00099">
    <property type="entry name" value="THIOLASE_3"/>
    <property type="match status" value="1"/>
</dbReference>
<accession>Q0KBP1</accession>
<accession>O68275</accession>
<evidence type="ECO:0000250" key="1"/>
<evidence type="ECO:0000255" key="2">
    <source>
        <dbReference type="PROSITE-ProRule" id="PRU10020"/>
    </source>
</evidence>
<evidence type="ECO:0000269" key="3">
    <source>
    </source>
</evidence>
<evidence type="ECO:0000305" key="4"/>
<evidence type="ECO:0007829" key="5">
    <source>
        <dbReference type="PDB" id="4NZS"/>
    </source>
</evidence>
<evidence type="ECO:0007829" key="6">
    <source>
        <dbReference type="PDB" id="4W61"/>
    </source>
</evidence>
<name>BKTB_CUPNH</name>
<protein>
    <recommendedName>
        <fullName>Beta-ketothiolase BktB</fullName>
        <ecNumber>2.3.1.16</ecNumber>
        <ecNumber>2.3.1.9</ecNumber>
    </recommendedName>
    <alternativeName>
        <fullName>Acetyl-CoA acetyltransferase</fullName>
    </alternativeName>
    <alternativeName>
        <fullName>Acetyl-CoA acyltransferase</fullName>
    </alternativeName>
</protein>
<reference key="1">
    <citation type="journal article" date="1998" name="J. Bacteriol.">
        <title>Multiple beta-ketothiolases mediate poly(beta-hydroxyalkanoate) copolymer synthesis in Ralstonia eutropha.</title>
        <authorList>
            <person name="Slater S."/>
            <person name="Houmiel K.L."/>
            <person name="Tran M."/>
            <person name="Mitsky T.A."/>
            <person name="Taylor N.B."/>
            <person name="Padgette S.R."/>
            <person name="Gruys K.J."/>
        </authorList>
    </citation>
    <scope>NUCLEOTIDE SEQUENCE [GENOMIC DNA]</scope>
    <scope>PROTEIN SEQUENCE OF 1-16</scope>
    <scope>FUNCTION</scope>
    <scope>CATALYTIC ACTIVITY</scope>
    <scope>DISRUPTION PHENOTYPE</scope>
    <source>
        <strain>ATCC 17699 / DSM 428 / KCTC 22496 / NCIMB 10442 / H16 / Stanier 337</strain>
    </source>
</reference>
<reference key="2">
    <citation type="journal article" date="2006" name="Nat. Biotechnol.">
        <title>Genome sequence of the bioplastic-producing 'Knallgas' bacterium Ralstonia eutropha H16.</title>
        <authorList>
            <person name="Pohlmann A."/>
            <person name="Fricke W.F."/>
            <person name="Reinecke F."/>
            <person name="Kusian B."/>
            <person name="Liesegang H."/>
            <person name="Cramm R."/>
            <person name="Eitinger T."/>
            <person name="Ewering C."/>
            <person name="Poetter M."/>
            <person name="Schwartz E."/>
            <person name="Strittmatter A."/>
            <person name="Voss I."/>
            <person name="Gottschalk G."/>
            <person name="Steinbuechel A."/>
            <person name="Friedrich B."/>
            <person name="Bowien B."/>
        </authorList>
    </citation>
    <scope>NUCLEOTIDE SEQUENCE [LARGE SCALE GENOMIC DNA]</scope>
    <source>
        <strain>ATCC 17699 / DSM 428 / KCTC 22496 / NCIMB 10442 / H16 / Stanier 337</strain>
    </source>
</reference>